<name>MUTS2_STRPI</name>
<accession>B1I9K1</accession>
<proteinExistence type="inferred from homology"/>
<feature type="chain" id="PRO_1000093397" description="Endonuclease MutS2">
    <location>
        <begin position="1"/>
        <end position="778"/>
    </location>
</feature>
<feature type="domain" description="Smr" evidence="1">
    <location>
        <begin position="702"/>
        <end position="777"/>
    </location>
</feature>
<feature type="binding site" evidence="1">
    <location>
        <begin position="328"/>
        <end position="335"/>
    </location>
    <ligand>
        <name>ATP</name>
        <dbReference type="ChEBI" id="CHEBI:30616"/>
    </ligand>
</feature>
<organism>
    <name type="scientific">Streptococcus pneumoniae (strain Hungary19A-6)</name>
    <dbReference type="NCBI Taxonomy" id="487214"/>
    <lineage>
        <taxon>Bacteria</taxon>
        <taxon>Bacillati</taxon>
        <taxon>Bacillota</taxon>
        <taxon>Bacilli</taxon>
        <taxon>Lactobacillales</taxon>
        <taxon>Streptococcaceae</taxon>
        <taxon>Streptococcus</taxon>
    </lineage>
</organism>
<comment type="function">
    <text evidence="1">Endonuclease that is involved in the suppression of homologous recombination and thus may have a key role in the control of bacterial genetic diversity.</text>
</comment>
<comment type="function">
    <text evidence="1">Acts as a ribosome collision sensor, splitting the ribosome into its 2 subunits. Detects stalled/collided 70S ribosomes which it binds and splits by an ATP-hydrolysis driven conformational change. Acts upstream of the ribosome quality control system (RQC), a ribosome-associated complex that mediates the extraction of incompletely synthesized nascent chains from stalled ribosomes and their subsequent degradation. Probably generates substrates for RQC.</text>
</comment>
<comment type="subunit">
    <text evidence="1">Homodimer. Binds to stalled ribosomes, contacting rRNA.</text>
</comment>
<comment type="similarity">
    <text evidence="1">Belongs to the DNA mismatch repair MutS family. MutS2 subfamily.</text>
</comment>
<keyword id="KW-0067">ATP-binding</keyword>
<keyword id="KW-0238">DNA-binding</keyword>
<keyword id="KW-0255">Endonuclease</keyword>
<keyword id="KW-0378">Hydrolase</keyword>
<keyword id="KW-0540">Nuclease</keyword>
<keyword id="KW-0547">Nucleotide-binding</keyword>
<keyword id="KW-0694">RNA-binding</keyword>
<keyword id="KW-0699">rRNA-binding</keyword>
<gene>
    <name evidence="1" type="primary">mutS2</name>
    <name evidence="1" type="synonym">rqcU</name>
    <name type="ordered locus">SPH_0515</name>
</gene>
<sequence>MNKKILETLEFDKVKALFEPHLLTEQGLEQLRQLAPTAKADKIKQAFAEMKEMQALFVEQPHFTILSTKEIAGVCKRLEMGADLNIEEFLLLKRVLLTSRELQSFYANLENVSLEELAFWFEKLHDFPQLQGNLQAFNDAGFIENFASEELARIRRKIHDSESQVRDVLQDLLKQKAQMLTEGIVASRNGRQVLPVKNTYRNKIAGVVHDISASGNTVYIEPREVVKLSEEIASLRADERYEMLRILQEISERVRPHAAEIANDAWIIGHLDLIRAKVRFIQERQAVVPQLSENQEIQLLHVCHPLVKNAVANDVYFGQDLTAIVITGPNTGGKTIMLKTLGLTQVMAQSGLPILADKGSRVGIFEEIFADIGDEQSIEQSLSTFSSHMTNIVDILGKVNQHSLLLLDELGAGTDPQEGAALAMAILEDLRLRQIKTMATTHYPELKAYGIETAFVQNASMEFDTATLRPTYRFMQGVPGRSNAFEIAKRLGLSEVIVGDASQQIDQDNDVNRIIEQLEEQTLESRKRLDNIREVEQENLKMNRALKKLYNELNREKETELNKAREQAAEIVDMALSESDQILKNLHSKSQLKPHEIIEAKAKLKKLAPEKVDLSKNKVLQKAKKKRAPKVGDDIVVLSYGQRGTLTSQLKDGRWEAQVGLIKMTLEEKEFDLVQAQQEKAVKKKQVNVVKRTSGRGPQARLDLRGKRYEEAMNELDTFIDQALLNNMAQVDIIHGIGTGVIREGVTKYLQRNKHVKSFGYAPQNAGGSGATIVTFKG</sequence>
<dbReference type="EC" id="3.1.-.-" evidence="1"/>
<dbReference type="EC" id="3.6.4.-" evidence="1"/>
<dbReference type="EMBL" id="CP000936">
    <property type="protein sequence ID" value="ACA35692.1"/>
    <property type="molecule type" value="Genomic_DNA"/>
</dbReference>
<dbReference type="RefSeq" id="WP_001035029.1">
    <property type="nucleotide sequence ID" value="NC_010380.1"/>
</dbReference>
<dbReference type="SMR" id="B1I9K1"/>
<dbReference type="KEGG" id="spv:SPH_0515"/>
<dbReference type="HOGENOM" id="CLU_011252_2_1_9"/>
<dbReference type="Proteomes" id="UP000002163">
    <property type="component" value="Chromosome"/>
</dbReference>
<dbReference type="GO" id="GO:0005524">
    <property type="term" value="F:ATP binding"/>
    <property type="evidence" value="ECO:0007669"/>
    <property type="project" value="UniProtKB-UniRule"/>
</dbReference>
<dbReference type="GO" id="GO:0016887">
    <property type="term" value="F:ATP hydrolysis activity"/>
    <property type="evidence" value="ECO:0007669"/>
    <property type="project" value="InterPro"/>
</dbReference>
<dbReference type="GO" id="GO:0140664">
    <property type="term" value="F:ATP-dependent DNA damage sensor activity"/>
    <property type="evidence" value="ECO:0007669"/>
    <property type="project" value="InterPro"/>
</dbReference>
<dbReference type="GO" id="GO:0004519">
    <property type="term" value="F:endonuclease activity"/>
    <property type="evidence" value="ECO:0007669"/>
    <property type="project" value="UniProtKB-UniRule"/>
</dbReference>
<dbReference type="GO" id="GO:0030983">
    <property type="term" value="F:mismatched DNA binding"/>
    <property type="evidence" value="ECO:0007669"/>
    <property type="project" value="InterPro"/>
</dbReference>
<dbReference type="GO" id="GO:0043023">
    <property type="term" value="F:ribosomal large subunit binding"/>
    <property type="evidence" value="ECO:0007669"/>
    <property type="project" value="UniProtKB-UniRule"/>
</dbReference>
<dbReference type="GO" id="GO:0019843">
    <property type="term" value="F:rRNA binding"/>
    <property type="evidence" value="ECO:0007669"/>
    <property type="project" value="UniProtKB-UniRule"/>
</dbReference>
<dbReference type="GO" id="GO:0006298">
    <property type="term" value="P:mismatch repair"/>
    <property type="evidence" value="ECO:0007669"/>
    <property type="project" value="InterPro"/>
</dbReference>
<dbReference type="GO" id="GO:0045910">
    <property type="term" value="P:negative regulation of DNA recombination"/>
    <property type="evidence" value="ECO:0007669"/>
    <property type="project" value="InterPro"/>
</dbReference>
<dbReference type="GO" id="GO:0072344">
    <property type="term" value="P:rescue of stalled ribosome"/>
    <property type="evidence" value="ECO:0007669"/>
    <property type="project" value="UniProtKB-UniRule"/>
</dbReference>
<dbReference type="FunFam" id="3.30.1370.110:FF:000005">
    <property type="entry name" value="Endonuclease MutS2"/>
    <property type="match status" value="1"/>
</dbReference>
<dbReference type="FunFam" id="3.40.50.300:FF:000830">
    <property type="entry name" value="Endonuclease MutS2"/>
    <property type="match status" value="1"/>
</dbReference>
<dbReference type="Gene3D" id="3.30.1370.110">
    <property type="match status" value="1"/>
</dbReference>
<dbReference type="Gene3D" id="3.40.50.300">
    <property type="entry name" value="P-loop containing nucleotide triphosphate hydrolases"/>
    <property type="match status" value="1"/>
</dbReference>
<dbReference type="HAMAP" id="MF_00092">
    <property type="entry name" value="MutS2"/>
    <property type="match status" value="1"/>
</dbReference>
<dbReference type="InterPro" id="IPR000432">
    <property type="entry name" value="DNA_mismatch_repair_MutS_C"/>
</dbReference>
<dbReference type="InterPro" id="IPR007696">
    <property type="entry name" value="DNA_mismatch_repair_MutS_core"/>
</dbReference>
<dbReference type="InterPro" id="IPR036187">
    <property type="entry name" value="DNA_mismatch_repair_MutS_sf"/>
</dbReference>
<dbReference type="InterPro" id="IPR046893">
    <property type="entry name" value="MSSS"/>
</dbReference>
<dbReference type="InterPro" id="IPR045076">
    <property type="entry name" value="MutS"/>
</dbReference>
<dbReference type="InterPro" id="IPR005747">
    <property type="entry name" value="MutS2"/>
</dbReference>
<dbReference type="InterPro" id="IPR027417">
    <property type="entry name" value="P-loop_NTPase"/>
</dbReference>
<dbReference type="InterPro" id="IPR002625">
    <property type="entry name" value="Smr_dom"/>
</dbReference>
<dbReference type="InterPro" id="IPR036063">
    <property type="entry name" value="Smr_dom_sf"/>
</dbReference>
<dbReference type="NCBIfam" id="TIGR01069">
    <property type="entry name" value="mutS2"/>
    <property type="match status" value="1"/>
</dbReference>
<dbReference type="PANTHER" id="PTHR48466">
    <property type="entry name" value="OS10G0509000 PROTEIN-RELATED"/>
    <property type="match status" value="1"/>
</dbReference>
<dbReference type="PANTHER" id="PTHR48466:SF1">
    <property type="entry name" value="SMR DOMAIN-CONTAINING PROTEIN"/>
    <property type="match status" value="1"/>
</dbReference>
<dbReference type="Pfam" id="PF20297">
    <property type="entry name" value="MSSS"/>
    <property type="match status" value="1"/>
</dbReference>
<dbReference type="Pfam" id="PF00488">
    <property type="entry name" value="MutS_V"/>
    <property type="match status" value="1"/>
</dbReference>
<dbReference type="Pfam" id="PF01713">
    <property type="entry name" value="Smr"/>
    <property type="match status" value="1"/>
</dbReference>
<dbReference type="PIRSF" id="PIRSF005814">
    <property type="entry name" value="MutS_YshD"/>
    <property type="match status" value="1"/>
</dbReference>
<dbReference type="SMART" id="SM00534">
    <property type="entry name" value="MUTSac"/>
    <property type="match status" value="1"/>
</dbReference>
<dbReference type="SMART" id="SM00533">
    <property type="entry name" value="MUTSd"/>
    <property type="match status" value="1"/>
</dbReference>
<dbReference type="SMART" id="SM00463">
    <property type="entry name" value="SMR"/>
    <property type="match status" value="1"/>
</dbReference>
<dbReference type="SUPFAM" id="SSF48334">
    <property type="entry name" value="DNA repair protein MutS, domain III"/>
    <property type="match status" value="1"/>
</dbReference>
<dbReference type="SUPFAM" id="SSF52540">
    <property type="entry name" value="P-loop containing nucleoside triphosphate hydrolases"/>
    <property type="match status" value="1"/>
</dbReference>
<dbReference type="SUPFAM" id="SSF160443">
    <property type="entry name" value="SMR domain-like"/>
    <property type="match status" value="1"/>
</dbReference>
<dbReference type="PROSITE" id="PS00486">
    <property type="entry name" value="DNA_MISMATCH_REPAIR_2"/>
    <property type="match status" value="1"/>
</dbReference>
<dbReference type="PROSITE" id="PS50828">
    <property type="entry name" value="SMR"/>
    <property type="match status" value="1"/>
</dbReference>
<evidence type="ECO:0000255" key="1">
    <source>
        <dbReference type="HAMAP-Rule" id="MF_00092"/>
    </source>
</evidence>
<reference key="1">
    <citation type="journal article" date="2010" name="Genome Biol.">
        <title>Structure and dynamics of the pan-genome of Streptococcus pneumoniae and closely related species.</title>
        <authorList>
            <person name="Donati C."/>
            <person name="Hiller N.L."/>
            <person name="Tettelin H."/>
            <person name="Muzzi A."/>
            <person name="Croucher N.J."/>
            <person name="Angiuoli S.V."/>
            <person name="Oggioni M."/>
            <person name="Dunning Hotopp J.C."/>
            <person name="Hu F.Z."/>
            <person name="Riley D.R."/>
            <person name="Covacci A."/>
            <person name="Mitchell T.J."/>
            <person name="Bentley S.D."/>
            <person name="Kilian M."/>
            <person name="Ehrlich G.D."/>
            <person name="Rappuoli R."/>
            <person name="Moxon E.R."/>
            <person name="Masignani V."/>
        </authorList>
    </citation>
    <scope>NUCLEOTIDE SEQUENCE [LARGE SCALE GENOMIC DNA]</scope>
    <source>
        <strain>Hungary19A-6</strain>
    </source>
</reference>
<protein>
    <recommendedName>
        <fullName evidence="1">Endonuclease MutS2</fullName>
        <ecNumber evidence="1">3.1.-.-</ecNumber>
    </recommendedName>
    <alternativeName>
        <fullName evidence="1">Ribosome-associated protein quality control-upstream factor</fullName>
        <shortName evidence="1">RQC-upstream factor</shortName>
        <shortName evidence="1">RqcU</shortName>
        <ecNumber evidence="1">3.6.4.-</ecNumber>
    </alternativeName>
</protein>